<reference key="1">
    <citation type="submission" date="2007-05" db="EMBL/GenBank/DDBJ databases">
        <title>Complete sequence of chromosome of Staphylococcus aureus subsp. aureus JH9.</title>
        <authorList>
            <consortium name="US DOE Joint Genome Institute"/>
            <person name="Copeland A."/>
            <person name="Lucas S."/>
            <person name="Lapidus A."/>
            <person name="Barry K."/>
            <person name="Detter J.C."/>
            <person name="Glavina del Rio T."/>
            <person name="Hammon N."/>
            <person name="Israni S."/>
            <person name="Pitluck S."/>
            <person name="Chain P."/>
            <person name="Malfatti S."/>
            <person name="Shin M."/>
            <person name="Vergez L."/>
            <person name="Schmutz J."/>
            <person name="Larimer F."/>
            <person name="Land M."/>
            <person name="Hauser L."/>
            <person name="Kyrpides N."/>
            <person name="Kim E."/>
            <person name="Tomasz A."/>
            <person name="Richardson P."/>
        </authorList>
    </citation>
    <scope>NUCLEOTIDE SEQUENCE [LARGE SCALE GENOMIC DNA]</scope>
    <source>
        <strain>JH9</strain>
    </source>
</reference>
<feature type="chain" id="PRO_1000085590" description="FMN-dependent NADH:quinone oxidoreductase">
    <location>
        <begin position="1"/>
        <end position="208"/>
    </location>
</feature>
<feature type="binding site" evidence="1">
    <location>
        <begin position="17"/>
        <end position="19"/>
    </location>
    <ligand>
        <name>FMN</name>
        <dbReference type="ChEBI" id="CHEBI:58210"/>
    </ligand>
</feature>
<feature type="binding site" evidence="1">
    <location>
        <begin position="99"/>
        <end position="102"/>
    </location>
    <ligand>
        <name>FMN</name>
        <dbReference type="ChEBI" id="CHEBI:58210"/>
    </ligand>
</feature>
<feature type="binding site" evidence="1">
    <location>
        <begin position="143"/>
        <end position="146"/>
    </location>
    <ligand>
        <name>FMN</name>
        <dbReference type="ChEBI" id="CHEBI:58210"/>
    </ligand>
</feature>
<dbReference type="EC" id="1.6.5.-" evidence="1"/>
<dbReference type="EC" id="1.7.1.17" evidence="1"/>
<dbReference type="EMBL" id="CP000703">
    <property type="protein sequence ID" value="ABQ48003.1"/>
    <property type="molecule type" value="Genomic_DNA"/>
</dbReference>
<dbReference type="RefSeq" id="WP_001151451.1">
    <property type="nucleotide sequence ID" value="NC_009487.1"/>
</dbReference>
<dbReference type="SMR" id="A5IP80"/>
<dbReference type="KEGG" id="saj:SaurJH9_0196"/>
<dbReference type="HOGENOM" id="CLU_088964_3_1_9"/>
<dbReference type="GO" id="GO:0009055">
    <property type="term" value="F:electron transfer activity"/>
    <property type="evidence" value="ECO:0007669"/>
    <property type="project" value="UniProtKB-UniRule"/>
</dbReference>
<dbReference type="GO" id="GO:0010181">
    <property type="term" value="F:FMN binding"/>
    <property type="evidence" value="ECO:0007669"/>
    <property type="project" value="UniProtKB-UniRule"/>
</dbReference>
<dbReference type="GO" id="GO:0016652">
    <property type="term" value="F:oxidoreductase activity, acting on NAD(P)H as acceptor"/>
    <property type="evidence" value="ECO:0007669"/>
    <property type="project" value="UniProtKB-UniRule"/>
</dbReference>
<dbReference type="GO" id="GO:0016655">
    <property type="term" value="F:oxidoreductase activity, acting on NAD(P)H, quinone or similar compound as acceptor"/>
    <property type="evidence" value="ECO:0007669"/>
    <property type="project" value="InterPro"/>
</dbReference>
<dbReference type="Gene3D" id="3.40.50.360">
    <property type="match status" value="1"/>
</dbReference>
<dbReference type="HAMAP" id="MF_01216">
    <property type="entry name" value="Azoreductase_type1"/>
    <property type="match status" value="1"/>
</dbReference>
<dbReference type="InterPro" id="IPR003680">
    <property type="entry name" value="Flavodoxin_fold"/>
</dbReference>
<dbReference type="InterPro" id="IPR029039">
    <property type="entry name" value="Flavoprotein-like_sf"/>
</dbReference>
<dbReference type="InterPro" id="IPR050104">
    <property type="entry name" value="FMN-dep_NADH:Q_OxRdtase_AzoR1"/>
</dbReference>
<dbReference type="InterPro" id="IPR023048">
    <property type="entry name" value="NADH:quinone_OxRdtase_FMN_depd"/>
</dbReference>
<dbReference type="NCBIfam" id="NF010075">
    <property type="entry name" value="PRK13556.1"/>
    <property type="match status" value="1"/>
</dbReference>
<dbReference type="PANTHER" id="PTHR43741">
    <property type="entry name" value="FMN-DEPENDENT NADH-AZOREDUCTASE 1"/>
    <property type="match status" value="1"/>
</dbReference>
<dbReference type="PANTHER" id="PTHR43741:SF7">
    <property type="entry name" value="FMN-DEPENDENT NADH:QUINONE OXIDOREDUCTASE"/>
    <property type="match status" value="1"/>
</dbReference>
<dbReference type="Pfam" id="PF02525">
    <property type="entry name" value="Flavodoxin_2"/>
    <property type="match status" value="1"/>
</dbReference>
<dbReference type="SUPFAM" id="SSF52218">
    <property type="entry name" value="Flavoproteins"/>
    <property type="match status" value="1"/>
</dbReference>
<gene>
    <name evidence="1" type="primary">azoR</name>
    <name type="ordered locus">SaurJH9_0196</name>
</gene>
<comment type="function">
    <text evidence="1">Quinone reductase that provides resistance to thiol-specific stress caused by electrophilic quinones.</text>
</comment>
<comment type="function">
    <text evidence="1">Also exhibits azoreductase activity. Catalyzes the reductive cleavage of the azo bond in aromatic azo compounds to the corresponding amines.</text>
</comment>
<comment type="catalytic activity">
    <reaction evidence="1">
        <text>2 a quinone + NADH + H(+) = 2 a 1,4-benzosemiquinone + NAD(+)</text>
        <dbReference type="Rhea" id="RHEA:65952"/>
        <dbReference type="ChEBI" id="CHEBI:15378"/>
        <dbReference type="ChEBI" id="CHEBI:57540"/>
        <dbReference type="ChEBI" id="CHEBI:57945"/>
        <dbReference type="ChEBI" id="CHEBI:132124"/>
        <dbReference type="ChEBI" id="CHEBI:134225"/>
    </reaction>
</comment>
<comment type="catalytic activity">
    <reaction evidence="1">
        <text>N,N-dimethyl-1,4-phenylenediamine + anthranilate + 2 NAD(+) = 2-(4-dimethylaminophenyl)diazenylbenzoate + 2 NADH + 2 H(+)</text>
        <dbReference type="Rhea" id="RHEA:55872"/>
        <dbReference type="ChEBI" id="CHEBI:15378"/>
        <dbReference type="ChEBI" id="CHEBI:15783"/>
        <dbReference type="ChEBI" id="CHEBI:16567"/>
        <dbReference type="ChEBI" id="CHEBI:57540"/>
        <dbReference type="ChEBI" id="CHEBI:57945"/>
        <dbReference type="ChEBI" id="CHEBI:71579"/>
        <dbReference type="EC" id="1.7.1.17"/>
    </reaction>
</comment>
<comment type="cofactor">
    <cofactor evidence="1">
        <name>FMN</name>
        <dbReference type="ChEBI" id="CHEBI:58210"/>
    </cofactor>
    <text evidence="1">Binds 1 FMN per subunit.</text>
</comment>
<comment type="subunit">
    <text evidence="1">Homodimer.</text>
</comment>
<comment type="similarity">
    <text evidence="1">Belongs to the azoreductase type 1 family.</text>
</comment>
<evidence type="ECO:0000255" key="1">
    <source>
        <dbReference type="HAMAP-Rule" id="MF_01216"/>
    </source>
</evidence>
<keyword id="KW-0285">Flavoprotein</keyword>
<keyword id="KW-0288">FMN</keyword>
<keyword id="KW-0520">NAD</keyword>
<keyword id="KW-0560">Oxidoreductase</keyword>
<accession>A5IP80</accession>
<protein>
    <recommendedName>
        <fullName evidence="1">FMN-dependent NADH:quinone oxidoreductase</fullName>
        <ecNumber evidence="1">1.6.5.-</ecNumber>
    </recommendedName>
    <alternativeName>
        <fullName evidence="1">Azo-dye reductase</fullName>
    </alternativeName>
    <alternativeName>
        <fullName evidence="1">FMN-dependent NADH-azo compound oxidoreductase</fullName>
    </alternativeName>
    <alternativeName>
        <fullName evidence="1">FMN-dependent NADH-azoreductase</fullName>
        <ecNumber evidence="1">1.7.1.17</ecNumber>
    </alternativeName>
</protein>
<proteinExistence type="inferred from homology"/>
<name>AZOR_STAA9</name>
<organism>
    <name type="scientific">Staphylococcus aureus (strain JH9)</name>
    <dbReference type="NCBI Taxonomy" id="359786"/>
    <lineage>
        <taxon>Bacteria</taxon>
        <taxon>Bacillati</taxon>
        <taxon>Bacillota</taxon>
        <taxon>Bacilli</taxon>
        <taxon>Bacillales</taxon>
        <taxon>Staphylococcaceae</taxon>
        <taxon>Staphylococcus</taxon>
    </lineage>
</organism>
<sequence length="208" mass="23353">MAKVLYITAHPFNELVSNSMAAGKAFIETYQQQHPDDEVKHIDLFETYIPVIDKDVLTGWGKMSNGETLTDDEQMKVSRLSDILEEFLSADKYVFVTPMWNLSFPPVVKAYIDAISIAGKTFKYSAEGPQGLLTDKKVLHIQSRGGYYTEGPAADFEMGDRYLRTIMTFLGVPSYETIIIEGHNAEPHKTEEIKATSINNAEKLATTF</sequence>